<accession>Q31XT6</accession>
<name>GLYA_SHIBS</name>
<protein>
    <recommendedName>
        <fullName evidence="1">Serine hydroxymethyltransferase</fullName>
        <shortName evidence="1">SHMT</shortName>
        <shortName evidence="1">Serine methylase</shortName>
        <ecNumber evidence="1">2.1.2.1</ecNumber>
    </recommendedName>
</protein>
<reference key="1">
    <citation type="journal article" date="2005" name="Nucleic Acids Res.">
        <title>Genome dynamics and diversity of Shigella species, the etiologic agents of bacillary dysentery.</title>
        <authorList>
            <person name="Yang F."/>
            <person name="Yang J."/>
            <person name="Zhang X."/>
            <person name="Chen L."/>
            <person name="Jiang Y."/>
            <person name="Yan Y."/>
            <person name="Tang X."/>
            <person name="Wang J."/>
            <person name="Xiong Z."/>
            <person name="Dong J."/>
            <person name="Xue Y."/>
            <person name="Zhu Y."/>
            <person name="Xu X."/>
            <person name="Sun L."/>
            <person name="Chen S."/>
            <person name="Nie H."/>
            <person name="Peng J."/>
            <person name="Xu J."/>
            <person name="Wang Y."/>
            <person name="Yuan Z."/>
            <person name="Wen Y."/>
            <person name="Yao Z."/>
            <person name="Shen Y."/>
            <person name="Qiang B."/>
            <person name="Hou Y."/>
            <person name="Yu J."/>
            <person name="Jin Q."/>
        </authorList>
    </citation>
    <scope>NUCLEOTIDE SEQUENCE [LARGE SCALE GENOMIC DNA]</scope>
    <source>
        <strain>Sb227</strain>
    </source>
</reference>
<sequence>MLKREMNIADYDAELWQAMEQEKVRQEEHIELIASENYTSPRVMQAQGSQLTNKYAEGYPGKRYYGGCEYVDIVEQLAIDRAKELFGADYANVQPHSGSQANFAVYTALLEPGDTVLGMNLAHGGHLTHGSPVNFSGKLYNIVPYGIDATGHIDYADLEKQAKEHKPKMIIGGFSAYSGVVDWAKMREIADSIGAYLFVDMAHVAGLVAAGVYPNPVPHAHVVTTTTHKTLAGPRGGLILAKGGSEELYKKLNSAVFPGGQGGPLMHVIAGKAVALKEAMEPEFKTYQQQVAKNAKAMVEVFLERGYKVVSGGTDNHLFLVDLVDKNLTGKEADAALGRANITVNKNSVPNDPKSPFVTSGIRVGTPAITRRGFKEAEAKELAGWMCDVLDSINDEAVIERIKGKVLDICARYPVYA</sequence>
<keyword id="KW-0007">Acetylation</keyword>
<keyword id="KW-0028">Amino-acid biosynthesis</keyword>
<keyword id="KW-0963">Cytoplasm</keyword>
<keyword id="KW-0554">One-carbon metabolism</keyword>
<keyword id="KW-0663">Pyridoxal phosphate</keyword>
<keyword id="KW-0808">Transferase</keyword>
<comment type="function">
    <text evidence="1">Catalyzes the reversible interconversion of serine and glycine with tetrahydrofolate (THF) serving as the one-carbon carrier. This reaction serves as the major source of one-carbon groups required for the biosynthesis of purines, thymidylate, methionine, and other important biomolecules. Also exhibits THF-independent aldolase activity toward beta-hydroxyamino acids, producing glycine and aldehydes, via a retro-aldol mechanism.</text>
</comment>
<comment type="catalytic activity">
    <reaction evidence="1">
        <text>(6R)-5,10-methylene-5,6,7,8-tetrahydrofolate + glycine + H2O = (6S)-5,6,7,8-tetrahydrofolate + L-serine</text>
        <dbReference type="Rhea" id="RHEA:15481"/>
        <dbReference type="ChEBI" id="CHEBI:15377"/>
        <dbReference type="ChEBI" id="CHEBI:15636"/>
        <dbReference type="ChEBI" id="CHEBI:33384"/>
        <dbReference type="ChEBI" id="CHEBI:57305"/>
        <dbReference type="ChEBI" id="CHEBI:57453"/>
        <dbReference type="EC" id="2.1.2.1"/>
    </reaction>
</comment>
<comment type="cofactor">
    <cofactor evidence="1">
        <name>pyridoxal 5'-phosphate</name>
        <dbReference type="ChEBI" id="CHEBI:597326"/>
    </cofactor>
</comment>
<comment type="pathway">
    <text evidence="1">One-carbon metabolism; tetrahydrofolate interconversion.</text>
</comment>
<comment type="pathway">
    <text evidence="1">Amino-acid biosynthesis; glycine biosynthesis; glycine from L-serine: step 1/1.</text>
</comment>
<comment type="subunit">
    <text evidence="1">Homodimer.</text>
</comment>
<comment type="subcellular location">
    <subcellularLocation>
        <location evidence="1">Cytoplasm</location>
    </subcellularLocation>
</comment>
<comment type="similarity">
    <text evidence="1">Belongs to the SHMT family.</text>
</comment>
<dbReference type="EC" id="2.1.2.1" evidence="1"/>
<dbReference type="EMBL" id="CP000036">
    <property type="protein sequence ID" value="ABB67122.1"/>
    <property type="molecule type" value="Genomic_DNA"/>
</dbReference>
<dbReference type="RefSeq" id="WP_000919159.1">
    <property type="nucleotide sequence ID" value="NC_007613.1"/>
</dbReference>
<dbReference type="SMR" id="Q31XT6"/>
<dbReference type="GeneID" id="89517346"/>
<dbReference type="KEGG" id="sbo:SBO_2579"/>
<dbReference type="HOGENOM" id="CLU_022477_2_1_6"/>
<dbReference type="UniPathway" id="UPA00193"/>
<dbReference type="UniPathway" id="UPA00288">
    <property type="reaction ID" value="UER01023"/>
</dbReference>
<dbReference type="Proteomes" id="UP000007067">
    <property type="component" value="Chromosome"/>
</dbReference>
<dbReference type="GO" id="GO:0005829">
    <property type="term" value="C:cytosol"/>
    <property type="evidence" value="ECO:0007669"/>
    <property type="project" value="TreeGrafter"/>
</dbReference>
<dbReference type="GO" id="GO:0004372">
    <property type="term" value="F:glycine hydroxymethyltransferase activity"/>
    <property type="evidence" value="ECO:0007669"/>
    <property type="project" value="UniProtKB-UniRule"/>
</dbReference>
<dbReference type="GO" id="GO:0030170">
    <property type="term" value="F:pyridoxal phosphate binding"/>
    <property type="evidence" value="ECO:0007669"/>
    <property type="project" value="UniProtKB-UniRule"/>
</dbReference>
<dbReference type="GO" id="GO:0019264">
    <property type="term" value="P:glycine biosynthetic process from serine"/>
    <property type="evidence" value="ECO:0007669"/>
    <property type="project" value="UniProtKB-UniRule"/>
</dbReference>
<dbReference type="GO" id="GO:0035999">
    <property type="term" value="P:tetrahydrofolate interconversion"/>
    <property type="evidence" value="ECO:0007669"/>
    <property type="project" value="UniProtKB-UniRule"/>
</dbReference>
<dbReference type="CDD" id="cd00378">
    <property type="entry name" value="SHMT"/>
    <property type="match status" value="1"/>
</dbReference>
<dbReference type="FunFam" id="3.40.640.10:FF:000001">
    <property type="entry name" value="Serine hydroxymethyltransferase"/>
    <property type="match status" value="1"/>
</dbReference>
<dbReference type="FunFam" id="3.90.1150.10:FF:000003">
    <property type="entry name" value="Serine hydroxymethyltransferase"/>
    <property type="match status" value="1"/>
</dbReference>
<dbReference type="Gene3D" id="3.90.1150.10">
    <property type="entry name" value="Aspartate Aminotransferase, domain 1"/>
    <property type="match status" value="1"/>
</dbReference>
<dbReference type="Gene3D" id="3.40.640.10">
    <property type="entry name" value="Type I PLP-dependent aspartate aminotransferase-like (Major domain)"/>
    <property type="match status" value="1"/>
</dbReference>
<dbReference type="HAMAP" id="MF_00051">
    <property type="entry name" value="SHMT"/>
    <property type="match status" value="1"/>
</dbReference>
<dbReference type="InterPro" id="IPR015424">
    <property type="entry name" value="PyrdxlP-dep_Trfase"/>
</dbReference>
<dbReference type="InterPro" id="IPR015421">
    <property type="entry name" value="PyrdxlP-dep_Trfase_major"/>
</dbReference>
<dbReference type="InterPro" id="IPR015422">
    <property type="entry name" value="PyrdxlP-dep_Trfase_small"/>
</dbReference>
<dbReference type="InterPro" id="IPR001085">
    <property type="entry name" value="Ser_HO-MeTrfase"/>
</dbReference>
<dbReference type="InterPro" id="IPR049943">
    <property type="entry name" value="Ser_HO-MeTrfase-like"/>
</dbReference>
<dbReference type="InterPro" id="IPR019798">
    <property type="entry name" value="Ser_HO-MeTrfase_PLP_BS"/>
</dbReference>
<dbReference type="InterPro" id="IPR039429">
    <property type="entry name" value="SHMT-like_dom"/>
</dbReference>
<dbReference type="NCBIfam" id="NF000586">
    <property type="entry name" value="PRK00011.1"/>
    <property type="match status" value="1"/>
</dbReference>
<dbReference type="PANTHER" id="PTHR11680">
    <property type="entry name" value="SERINE HYDROXYMETHYLTRANSFERASE"/>
    <property type="match status" value="1"/>
</dbReference>
<dbReference type="PANTHER" id="PTHR11680:SF50">
    <property type="entry name" value="SERINE HYDROXYMETHYLTRANSFERASE"/>
    <property type="match status" value="1"/>
</dbReference>
<dbReference type="Pfam" id="PF00464">
    <property type="entry name" value="SHMT"/>
    <property type="match status" value="1"/>
</dbReference>
<dbReference type="PIRSF" id="PIRSF000412">
    <property type="entry name" value="SHMT"/>
    <property type="match status" value="1"/>
</dbReference>
<dbReference type="SUPFAM" id="SSF53383">
    <property type="entry name" value="PLP-dependent transferases"/>
    <property type="match status" value="1"/>
</dbReference>
<dbReference type="PROSITE" id="PS00096">
    <property type="entry name" value="SHMT"/>
    <property type="match status" value="1"/>
</dbReference>
<gene>
    <name evidence="1" type="primary">glyA</name>
    <name type="ordered locus">SBO_2579</name>
</gene>
<feature type="chain" id="PRO_0000235021" description="Serine hydroxymethyltransferase">
    <location>
        <begin position="1"/>
        <end position="417"/>
    </location>
</feature>
<feature type="binding site" evidence="1">
    <location>
        <position position="121"/>
    </location>
    <ligand>
        <name>(6S)-5,6,7,8-tetrahydrofolate</name>
        <dbReference type="ChEBI" id="CHEBI:57453"/>
    </ligand>
</feature>
<feature type="binding site" evidence="1">
    <location>
        <begin position="125"/>
        <end position="127"/>
    </location>
    <ligand>
        <name>(6S)-5,6,7,8-tetrahydrofolate</name>
        <dbReference type="ChEBI" id="CHEBI:57453"/>
    </ligand>
</feature>
<feature type="binding site" evidence="1">
    <location>
        <begin position="355"/>
        <end position="357"/>
    </location>
    <ligand>
        <name>(6S)-5,6,7,8-tetrahydrofolate</name>
        <dbReference type="ChEBI" id="CHEBI:57453"/>
    </ligand>
</feature>
<feature type="site" description="Plays an important role in substrate specificity" evidence="1">
    <location>
        <position position="228"/>
    </location>
</feature>
<feature type="modified residue" description="N6-acetyllysine" evidence="1">
    <location>
        <position position="54"/>
    </location>
</feature>
<feature type="modified residue" description="N6-(pyridoxal phosphate)lysine" evidence="1">
    <location>
        <position position="229"/>
    </location>
</feature>
<feature type="modified residue" description="N6-acetyllysine" evidence="1">
    <location>
        <position position="250"/>
    </location>
</feature>
<feature type="modified residue" description="N6-acetyllysine" evidence="1">
    <location>
        <position position="285"/>
    </location>
</feature>
<feature type="modified residue" description="N6-acetyllysine" evidence="1">
    <location>
        <position position="354"/>
    </location>
</feature>
<feature type="modified residue" description="N6-acetyllysine" evidence="1">
    <location>
        <position position="375"/>
    </location>
</feature>
<evidence type="ECO:0000255" key="1">
    <source>
        <dbReference type="HAMAP-Rule" id="MF_00051"/>
    </source>
</evidence>
<organism>
    <name type="scientific">Shigella boydii serotype 4 (strain Sb227)</name>
    <dbReference type="NCBI Taxonomy" id="300268"/>
    <lineage>
        <taxon>Bacteria</taxon>
        <taxon>Pseudomonadati</taxon>
        <taxon>Pseudomonadota</taxon>
        <taxon>Gammaproteobacteria</taxon>
        <taxon>Enterobacterales</taxon>
        <taxon>Enterobacteriaceae</taxon>
        <taxon>Shigella</taxon>
    </lineage>
</organism>
<proteinExistence type="inferred from homology"/>